<accession>P66718</accession>
<accession>Q97S94</accession>
<comment type="function">
    <text evidence="1">Participates in both the initiation and recycling phases of transcription. In the presence of the delta subunit, RNAP displays an increased specificity of transcription, a decreased affinity for nucleic acids, and an increased efficiency of RNA synthesis because of enhanced recycling.</text>
</comment>
<comment type="subunit">
    <text evidence="1">RNAP is composed of a core of 2 alpha, a beta and a beta' subunits. The core is associated with a delta subunit and one of several sigma factors.</text>
</comment>
<comment type="similarity">
    <text evidence="1">Belongs to the RpoE family.</text>
</comment>
<name>RPOE_STRR6</name>
<protein>
    <recommendedName>
        <fullName evidence="1">Probable DNA-directed RNA polymerase subunit delta</fullName>
    </recommendedName>
    <alternativeName>
        <fullName evidence="1">RNAP delta factor</fullName>
    </alternativeName>
</protein>
<organism>
    <name type="scientific">Streptococcus pneumoniae (strain ATCC BAA-255 / R6)</name>
    <dbReference type="NCBI Taxonomy" id="171101"/>
    <lineage>
        <taxon>Bacteria</taxon>
        <taxon>Bacillati</taxon>
        <taxon>Bacillota</taxon>
        <taxon>Bacilli</taxon>
        <taxon>Lactobacillales</taxon>
        <taxon>Streptococcaceae</taxon>
        <taxon>Streptococcus</taxon>
    </lineage>
</organism>
<proteinExistence type="inferred from homology"/>
<dbReference type="EMBL" id="AE007317">
    <property type="protein sequence ID" value="AAK99241.1"/>
    <property type="molecule type" value="Genomic_DNA"/>
</dbReference>
<dbReference type="PIR" id="E97926">
    <property type="entry name" value="E97926"/>
</dbReference>
<dbReference type="RefSeq" id="NP_358031.2">
    <property type="nucleotide sequence ID" value="NC_003098.1"/>
</dbReference>
<dbReference type="SMR" id="P66718"/>
<dbReference type="STRING" id="171101.spr0437"/>
<dbReference type="KEGG" id="spr:spr0437"/>
<dbReference type="PATRIC" id="fig|171101.6.peg.480"/>
<dbReference type="eggNOG" id="COG3343">
    <property type="taxonomic scope" value="Bacteria"/>
</dbReference>
<dbReference type="HOGENOM" id="CLU_116648_0_0_9"/>
<dbReference type="Proteomes" id="UP000000586">
    <property type="component" value="Chromosome"/>
</dbReference>
<dbReference type="GO" id="GO:0000428">
    <property type="term" value="C:DNA-directed RNA polymerase complex"/>
    <property type="evidence" value="ECO:0007669"/>
    <property type="project" value="UniProtKB-KW"/>
</dbReference>
<dbReference type="GO" id="GO:0003899">
    <property type="term" value="F:DNA-directed RNA polymerase activity"/>
    <property type="evidence" value="ECO:0007669"/>
    <property type="project" value="UniProtKB-UniRule"/>
</dbReference>
<dbReference type="GO" id="GO:0006351">
    <property type="term" value="P:DNA-templated transcription"/>
    <property type="evidence" value="ECO:0007669"/>
    <property type="project" value="InterPro"/>
</dbReference>
<dbReference type="GO" id="GO:0006355">
    <property type="term" value="P:regulation of DNA-templated transcription"/>
    <property type="evidence" value="ECO:0007669"/>
    <property type="project" value="UniProtKB-UniRule"/>
</dbReference>
<dbReference type="Gene3D" id="1.10.10.1250">
    <property type="entry name" value="RNA polymerase, subunit delta, N-terminal domain"/>
    <property type="match status" value="1"/>
</dbReference>
<dbReference type="HAMAP" id="MF_00357">
    <property type="entry name" value="RNApol_bact_RpoE"/>
    <property type="match status" value="1"/>
</dbReference>
<dbReference type="InterPro" id="IPR007759">
    <property type="entry name" value="Asxl_HARE-HTH"/>
</dbReference>
<dbReference type="InterPro" id="IPR038087">
    <property type="entry name" value="RNAP_delta_N_dom_sf"/>
</dbReference>
<dbReference type="InterPro" id="IPR029757">
    <property type="entry name" value="RpoE"/>
</dbReference>
<dbReference type="NCBIfam" id="TIGR04567">
    <property type="entry name" value="RNAP_delt_lowGC"/>
    <property type="match status" value="1"/>
</dbReference>
<dbReference type="Pfam" id="PF05066">
    <property type="entry name" value="HARE-HTH"/>
    <property type="match status" value="1"/>
</dbReference>
<dbReference type="PROSITE" id="PS51913">
    <property type="entry name" value="HTH_HARE"/>
    <property type="match status" value="1"/>
</dbReference>
<reference key="1">
    <citation type="journal article" date="2001" name="J. Bacteriol.">
        <title>Genome of the bacterium Streptococcus pneumoniae strain R6.</title>
        <authorList>
            <person name="Hoskins J."/>
            <person name="Alborn W.E. Jr."/>
            <person name="Arnold J."/>
            <person name="Blaszczak L.C."/>
            <person name="Burgett S."/>
            <person name="DeHoff B.S."/>
            <person name="Estrem S.T."/>
            <person name="Fritz L."/>
            <person name="Fu D.-J."/>
            <person name="Fuller W."/>
            <person name="Geringer C."/>
            <person name="Gilmour R."/>
            <person name="Glass J.S."/>
            <person name="Khoja H."/>
            <person name="Kraft A.R."/>
            <person name="Lagace R.E."/>
            <person name="LeBlanc D.J."/>
            <person name="Lee L.N."/>
            <person name="Lefkowitz E.J."/>
            <person name="Lu J."/>
            <person name="Matsushima P."/>
            <person name="McAhren S.M."/>
            <person name="McHenney M."/>
            <person name="McLeaster K."/>
            <person name="Mundy C.W."/>
            <person name="Nicas T.I."/>
            <person name="Norris F.H."/>
            <person name="O'Gara M."/>
            <person name="Peery R.B."/>
            <person name="Robertson G.T."/>
            <person name="Rockey P."/>
            <person name="Sun P.-M."/>
            <person name="Winkler M.E."/>
            <person name="Yang Y."/>
            <person name="Young-Bellido M."/>
            <person name="Zhao G."/>
            <person name="Zook C.A."/>
            <person name="Baltz R.H."/>
            <person name="Jaskunas S.R."/>
            <person name="Rosteck P.R. Jr."/>
            <person name="Skatrud P.L."/>
            <person name="Glass J.I."/>
        </authorList>
    </citation>
    <scope>NUCLEOTIDE SEQUENCE [LARGE SCALE GENOMIC DNA]</scope>
    <source>
        <strain>ATCC BAA-255 / R6</strain>
    </source>
</reference>
<keyword id="KW-0240">DNA-directed RNA polymerase</keyword>
<keyword id="KW-0548">Nucleotidyltransferase</keyword>
<keyword id="KW-1185">Reference proteome</keyword>
<keyword id="KW-0804">Transcription</keyword>
<keyword id="KW-0808">Transferase</keyword>
<evidence type="ECO:0000255" key="1">
    <source>
        <dbReference type="HAMAP-Rule" id="MF_00357"/>
    </source>
</evidence>
<evidence type="ECO:0000255" key="2">
    <source>
        <dbReference type="PROSITE-ProRule" id="PRU01261"/>
    </source>
</evidence>
<evidence type="ECO:0000256" key="3">
    <source>
        <dbReference type="SAM" id="MobiDB-lite"/>
    </source>
</evidence>
<gene>
    <name evidence="1" type="primary">rpoE</name>
    <name type="ordered locus">spr0437</name>
</gene>
<sequence length="200" mass="22736">MRRNALELEVFAGQEKSELSMIEVARAILELRGRDHEMHFSDLVNEIQNYLGTSNSDIREALPLFYTELNFDGSFISLGDNKWGLRSWYGVDEIDEEIIALEENDDDEVAPKAKKKRVNAFMDGDSDAIDYNADDPEDEDAYEADPALSYDDENPDDEKNEVEAYDAEINEIAPDDLGEDVDLNEDDDEFSDDDAETSEE</sequence>
<feature type="chain" id="PRO_0000204330" description="Probable DNA-directed RNA polymerase subunit delta">
    <location>
        <begin position="1"/>
        <end position="200"/>
    </location>
</feature>
<feature type="domain" description="HTH HARE-type" evidence="2">
    <location>
        <begin position="19"/>
        <end position="88"/>
    </location>
</feature>
<feature type="region of interest" description="Disordered" evidence="3">
    <location>
        <begin position="125"/>
        <end position="200"/>
    </location>
</feature>
<feature type="compositionally biased region" description="Acidic residues" evidence="3">
    <location>
        <begin position="125"/>
        <end position="143"/>
    </location>
</feature>
<feature type="compositionally biased region" description="Acidic residues" evidence="3">
    <location>
        <begin position="150"/>
        <end position="200"/>
    </location>
</feature>